<evidence type="ECO:0000250" key="1"/>
<evidence type="ECO:0000255" key="2"/>
<evidence type="ECO:0000256" key="3">
    <source>
        <dbReference type="SAM" id="MobiDB-lite"/>
    </source>
</evidence>
<evidence type="ECO:0000269" key="4">
    <source>
    </source>
</evidence>
<evidence type="ECO:0000269" key="5">
    <source>
    </source>
</evidence>
<evidence type="ECO:0000269" key="6">
    <source>
    </source>
</evidence>
<evidence type="ECO:0000269" key="7">
    <source>
    </source>
</evidence>
<evidence type="ECO:0000269" key="8">
    <source>
    </source>
</evidence>
<evidence type="ECO:0000269" key="9">
    <source>
    </source>
</evidence>
<evidence type="ECO:0000269" key="10">
    <source ref="10"/>
</evidence>
<evidence type="ECO:0000303" key="11">
    <source>
    </source>
</evidence>
<evidence type="ECO:0000305" key="12"/>
<evidence type="ECO:0000312" key="13">
    <source>
        <dbReference type="Araport" id="AT1G69180"/>
    </source>
</evidence>
<evidence type="ECO:0000312" key="14">
    <source>
        <dbReference type="EMBL" id="AAF27068.1"/>
    </source>
</evidence>
<evidence type="ECO:0000312" key="15">
    <source>
        <dbReference type="EMBL" id="AAG52485.1"/>
    </source>
</evidence>
<name>CRC_ARATH</name>
<protein>
    <recommendedName>
        <fullName evidence="11">Protein CRABS CLAW</fullName>
    </recommendedName>
</protein>
<keyword id="KW-0217">Developmental protein</keyword>
<keyword id="KW-0221">Differentiation</keyword>
<keyword id="KW-0238">DNA-binding</keyword>
<keyword id="KW-0287">Flowering</keyword>
<keyword id="KW-0479">Metal-binding</keyword>
<keyword id="KW-0539">Nucleus</keyword>
<keyword id="KW-1185">Reference proteome</keyword>
<keyword id="KW-0804">Transcription</keyword>
<keyword id="KW-0805">Transcription regulation</keyword>
<keyword id="KW-0862">Zinc</keyword>
<keyword id="KW-0863">Zinc-finger</keyword>
<reference key="1">
    <citation type="journal article" date="1999" name="Development">
        <title>CRABS CLAW, a gene that regulates carpel and nectary development in Arabidopsis, encodes a novel protein with zinc finger and helix-loop-helix domains.</title>
        <authorList>
            <person name="Bowman J.L."/>
            <person name="Smyth D.R."/>
        </authorList>
    </citation>
    <scope>NUCLEOTIDE SEQUENCE [MRNA]</scope>
    <scope>FUNCTION</scope>
    <scope>DEVELOPMENTAL STAGE</scope>
    <scope>TISSUE SPECIFICITY</scope>
    <scope>INDUCTION</scope>
    <scope>MUTAGENESIS OF GLU-129</scope>
    <source>
        <strain>cv. Landsberg erecta</strain>
    </source>
</reference>
<reference key="2">
    <citation type="journal article" date="2000" name="Nature">
        <title>Sequence and analysis of chromosome 1 of the plant Arabidopsis thaliana.</title>
        <authorList>
            <person name="Theologis A."/>
            <person name="Ecker J.R."/>
            <person name="Palm C.J."/>
            <person name="Federspiel N.A."/>
            <person name="Kaul S."/>
            <person name="White O."/>
            <person name="Alonso J."/>
            <person name="Altafi H."/>
            <person name="Araujo R."/>
            <person name="Bowman C.L."/>
            <person name="Brooks S.Y."/>
            <person name="Buehler E."/>
            <person name="Chan A."/>
            <person name="Chao Q."/>
            <person name="Chen H."/>
            <person name="Cheuk R.F."/>
            <person name="Chin C.W."/>
            <person name="Chung M.K."/>
            <person name="Conn L."/>
            <person name="Conway A.B."/>
            <person name="Conway A.R."/>
            <person name="Creasy T.H."/>
            <person name="Dewar K."/>
            <person name="Dunn P."/>
            <person name="Etgu P."/>
            <person name="Feldblyum T.V."/>
            <person name="Feng J.-D."/>
            <person name="Fong B."/>
            <person name="Fujii C.Y."/>
            <person name="Gill J.E."/>
            <person name="Goldsmith A.D."/>
            <person name="Haas B."/>
            <person name="Hansen N.F."/>
            <person name="Hughes B."/>
            <person name="Huizar L."/>
            <person name="Hunter J.L."/>
            <person name="Jenkins J."/>
            <person name="Johnson-Hopson C."/>
            <person name="Khan S."/>
            <person name="Khaykin E."/>
            <person name="Kim C.J."/>
            <person name="Koo H.L."/>
            <person name="Kremenetskaia I."/>
            <person name="Kurtz D.B."/>
            <person name="Kwan A."/>
            <person name="Lam B."/>
            <person name="Langin-Hooper S."/>
            <person name="Lee A."/>
            <person name="Lee J.M."/>
            <person name="Lenz C.A."/>
            <person name="Li J.H."/>
            <person name="Li Y.-P."/>
            <person name="Lin X."/>
            <person name="Liu S.X."/>
            <person name="Liu Z.A."/>
            <person name="Luros J.S."/>
            <person name="Maiti R."/>
            <person name="Marziali A."/>
            <person name="Militscher J."/>
            <person name="Miranda M."/>
            <person name="Nguyen M."/>
            <person name="Nierman W.C."/>
            <person name="Osborne B.I."/>
            <person name="Pai G."/>
            <person name="Peterson J."/>
            <person name="Pham P.K."/>
            <person name="Rizzo M."/>
            <person name="Rooney T."/>
            <person name="Rowley D."/>
            <person name="Sakano H."/>
            <person name="Salzberg S.L."/>
            <person name="Schwartz J.R."/>
            <person name="Shinn P."/>
            <person name="Southwick A.M."/>
            <person name="Sun H."/>
            <person name="Tallon L.J."/>
            <person name="Tambunga G."/>
            <person name="Toriumi M.J."/>
            <person name="Town C.D."/>
            <person name="Utterback T."/>
            <person name="Van Aken S."/>
            <person name="Vaysberg M."/>
            <person name="Vysotskaia V.S."/>
            <person name="Walker M."/>
            <person name="Wu D."/>
            <person name="Yu G."/>
            <person name="Fraser C.M."/>
            <person name="Venter J.C."/>
            <person name="Davis R.W."/>
        </authorList>
    </citation>
    <scope>NUCLEOTIDE SEQUENCE [LARGE SCALE GENOMIC DNA]</scope>
    <source>
        <strain>cv. Columbia</strain>
    </source>
</reference>
<reference key="3">
    <citation type="journal article" date="2017" name="Plant J.">
        <title>Araport11: a complete reannotation of the Arabidopsis thaliana reference genome.</title>
        <authorList>
            <person name="Cheng C.Y."/>
            <person name="Krishnakumar V."/>
            <person name="Chan A.P."/>
            <person name="Thibaud-Nissen F."/>
            <person name="Schobel S."/>
            <person name="Town C.D."/>
        </authorList>
    </citation>
    <scope>GENOME REANNOTATION</scope>
    <source>
        <strain>cv. Columbia</strain>
    </source>
</reference>
<reference key="4">
    <citation type="journal article" date="2003" name="Science">
        <title>Empirical analysis of transcriptional activity in the Arabidopsis genome.</title>
        <authorList>
            <person name="Yamada K."/>
            <person name="Lim J."/>
            <person name="Dale J.M."/>
            <person name="Chen H."/>
            <person name="Shinn P."/>
            <person name="Palm C.J."/>
            <person name="Southwick A.M."/>
            <person name="Wu H.C."/>
            <person name="Kim C.J."/>
            <person name="Nguyen M."/>
            <person name="Pham P.K."/>
            <person name="Cheuk R.F."/>
            <person name="Karlin-Newmann G."/>
            <person name="Liu S.X."/>
            <person name="Lam B."/>
            <person name="Sakano H."/>
            <person name="Wu T."/>
            <person name="Yu G."/>
            <person name="Miranda M."/>
            <person name="Quach H.L."/>
            <person name="Tripp M."/>
            <person name="Chang C.H."/>
            <person name="Lee J.M."/>
            <person name="Toriumi M.J."/>
            <person name="Chan M.M."/>
            <person name="Tang C.C."/>
            <person name="Onodera C.S."/>
            <person name="Deng J.M."/>
            <person name="Akiyama K."/>
            <person name="Ansari Y."/>
            <person name="Arakawa T."/>
            <person name="Banh J."/>
            <person name="Banno F."/>
            <person name="Bowser L."/>
            <person name="Brooks S.Y."/>
            <person name="Carninci P."/>
            <person name="Chao Q."/>
            <person name="Choy N."/>
            <person name="Enju A."/>
            <person name="Goldsmith A.D."/>
            <person name="Gurjal M."/>
            <person name="Hansen N.F."/>
            <person name="Hayashizaki Y."/>
            <person name="Johnson-Hopson C."/>
            <person name="Hsuan V.W."/>
            <person name="Iida K."/>
            <person name="Karnes M."/>
            <person name="Khan S."/>
            <person name="Koesema E."/>
            <person name="Ishida J."/>
            <person name="Jiang P.X."/>
            <person name="Jones T."/>
            <person name="Kawai J."/>
            <person name="Kamiya A."/>
            <person name="Meyers C."/>
            <person name="Nakajima M."/>
            <person name="Narusaka M."/>
            <person name="Seki M."/>
            <person name="Sakurai T."/>
            <person name="Satou M."/>
            <person name="Tamse R."/>
            <person name="Vaysberg M."/>
            <person name="Wallender E.K."/>
            <person name="Wong C."/>
            <person name="Yamamura Y."/>
            <person name="Yuan S."/>
            <person name="Shinozaki K."/>
            <person name="Davis R.W."/>
            <person name="Theologis A."/>
            <person name="Ecker J.R."/>
        </authorList>
    </citation>
    <scope>NUCLEOTIDE SEQUENCE [LARGE SCALE MRNA]</scope>
    <source>
        <strain>cv. Columbia</strain>
    </source>
</reference>
<reference key="5">
    <citation type="submission" date="2002-03" db="EMBL/GenBank/DDBJ databases">
        <title>Full-length cDNA from Arabidopsis thaliana.</title>
        <authorList>
            <person name="Brover V.V."/>
            <person name="Troukhan M.E."/>
            <person name="Alexandrov N.A."/>
            <person name="Lu Y.-P."/>
            <person name="Flavell R.B."/>
            <person name="Feldmann K.A."/>
        </authorList>
    </citation>
    <scope>NUCLEOTIDE SEQUENCE [LARGE SCALE MRNA]</scope>
</reference>
<reference key="6">
    <citation type="journal article" date="1999" name="Cell">
        <title>Distinct mechanisms promote polarity establishment in carpels of Arabidopsis.</title>
        <authorList>
            <person name="Eshed Y."/>
            <person name="Baum S.F."/>
            <person name="Bowman J.L."/>
        </authorList>
    </citation>
    <scope>FUNCTION</scope>
</reference>
<reference key="7">
    <citation type="journal article" date="1999" name="Development">
        <title>CRABS CLAW and SPATULA, two Arabidopsis genes that control carpel development in parallel with AGAMOUS.</title>
        <authorList>
            <person name="Alvarez J."/>
            <person name="Smyth D.R."/>
        </authorList>
    </citation>
    <scope>FUNCTION</scope>
</reference>
<reference key="8">
    <citation type="journal article" date="2000" name="Curr. Opin. Plant Biol.">
        <title>The YABBY gene family and abaxial cell fate.</title>
        <authorList>
            <person name="Bowman J.L."/>
        </authorList>
    </citation>
    <scope>GENE FAMILY</scope>
    <scope>NOMENCLATURE</scope>
</reference>
<reference key="9">
    <citation type="journal article" date="2001" name="Development">
        <title>The Arabidopsis nectary is an ABC-independent floral structure.</title>
        <authorList>
            <person name="Baum S.F."/>
            <person name="Eshed Y."/>
            <person name="Bowman J.L."/>
        </authorList>
    </citation>
    <scope>FUNCTION</scope>
</reference>
<reference key="10">
    <citation type="journal article" date="2002" name="Int. J. Plant Sci.">
        <title>CRABS CLAW and SPATULA genes regulate growth and pattern formation during gynoecium development in Arabidopsis thaliana.</title>
        <authorList>
            <person name="Alvarez J."/>
            <person name="Smyth D.R."/>
        </authorList>
        <dbReference type="AGRICOLA" id="IND23265209"/>
    </citation>
    <scope>FUNCTION</scope>
</reference>
<reference key="11">
    <citation type="journal article" date="2005" name="Plant Cell">
        <title>Activation of CRABS CLAW in the nectaries and carpels of Arabidopsis.</title>
        <authorList>
            <person name="Lee J.-Y."/>
            <person name="Baum S.F."/>
            <person name="Alvarez J."/>
            <person name="Patel A."/>
            <person name="Chitwood D.H."/>
            <person name="Bowman J.L."/>
        </authorList>
    </citation>
    <scope>FUNCTION</scope>
    <scope>INDUCTION</scope>
</reference>
<reference key="12">
    <citation type="journal article" date="2008" name="Plant Cell">
        <title>REBELOTE, SQUINT, and ULTRAPETALA1 function redundantly in the temporal regulation of floral meristem termination in Arabidopsis thaliana.</title>
        <authorList>
            <person name="Prunet N."/>
            <person name="Morel P."/>
            <person name="Thierry A.-M."/>
            <person name="Eshed Y."/>
            <person name="Bowman J.L."/>
            <person name="Negrutiu I."/>
            <person name="Trehin C."/>
        </authorList>
    </citation>
    <scope>DISRUPTION PHENOTYPE</scope>
</reference>
<proteinExistence type="evidence at protein level"/>
<comment type="function">
    <text evidence="4 5 6 7 8 10">Transcription factor required for the initiation of nectary development. Also involved in suppressing early radial growth of the gynoecium, in promoting its later elongation and in fusion of its carpels by regulating both cell division and expansion. Establishes the polar differentiation in the carpels by specifying abaxial cell fate in the ovary wall. Regulates both cell division and expansion.</text>
</comment>
<comment type="interaction">
    <interactant intactId="EBI-15197527">
        <id>Q8L925</id>
    </interactant>
    <interactant intactId="EBI-617095">
        <id>Q9LEZ3</id>
        <label>BIM1</label>
    </interactant>
    <organismsDiffer>false</organismsDiffer>
    <experiments>3</experiments>
</comment>
<comment type="interaction">
    <interactant intactId="EBI-15197527">
        <id>Q8L925</id>
    </interactant>
    <interactant intactId="EBI-15192881">
        <id>F4IPE3</id>
        <label>SGR5</label>
    </interactant>
    <organismsDiffer>false</organismsDiffer>
    <experiments>3</experiments>
</comment>
<comment type="subcellular location">
    <subcellularLocation>
        <location evidence="1">Nucleus</location>
    </subcellularLocation>
</comment>
<comment type="tissue specificity">
    <text evidence="5">Restricted to flowers, mostly in carpels and nectaries. Expressed at low levels in sepal primordia (buds), sepal receptacle and developing petal. Not detected in placental tissues, septum, stigma and ovules.</text>
</comment>
<comment type="developmental stage">
    <text evidence="5">In carpels, expression starts when the gynoecial primordia becomes distinct. First expressed in the lateral region of each carpel. Later resolves into two distinct domains, epidermal and internal. In epidermal tissues, mostly localized on the outer surface, successively from the base to the tip of the gynoecium and finally confined to the valve region before disappearing during last flowering stages. In internal tissues, first confined to four discrete zones adjacent to the future placental tissue occupying the full length of the elongating cylinder, declining from the apical regions and disappearing after the ovule primordia arise. Before nectaries initiation, expression occupies a ring of receptacle cells between the stamen and sepal primordia, from where nectaries will develop. Strongly expressed in nectaries until latest flowering stages.</text>
</comment>
<comment type="induction">
    <text evidence="5 8">Down-regulated by SPT and by A class genes AP2 and LUG in the outer whorl. In the third whorl, B class genes AP3 and PI, and the C class gene AG act redundantly with each other and in combination with SEP1, SEP2, SEP3, SHP1 and SHP2 to activate CRC in nectaries and carpels. LFY enhances its expression.</text>
</comment>
<comment type="disruption phenotype">
    <text evidence="9">The double mutants crc-1 rbl-1, crc-1 sqn-4, and crc-1 ult1-4 exhibit strong floral meristem (FM) indeterminacy with reiterations of extra floral whorls in the center of the flower.</text>
</comment>
<comment type="similarity">
    <text evidence="12">Belongs to the YABBY family.</text>
</comment>
<comment type="sequence caution" evidence="12">
    <conflict type="erroneous gene model prediction">
        <sequence resource="EMBL-CDS" id="AAF27068"/>
    </conflict>
</comment>
<comment type="sequence caution" evidence="12">
    <conflict type="erroneous initiation">
        <sequence resource="EMBL-CDS" id="AAM66994"/>
    </conflict>
    <text>Truncated N-terminus.</text>
</comment>
<organism>
    <name type="scientific">Arabidopsis thaliana</name>
    <name type="common">Mouse-ear cress</name>
    <dbReference type="NCBI Taxonomy" id="3702"/>
    <lineage>
        <taxon>Eukaryota</taxon>
        <taxon>Viridiplantae</taxon>
        <taxon>Streptophyta</taxon>
        <taxon>Embryophyta</taxon>
        <taxon>Tracheophyta</taxon>
        <taxon>Spermatophyta</taxon>
        <taxon>Magnoliopsida</taxon>
        <taxon>eudicotyledons</taxon>
        <taxon>Gunneridae</taxon>
        <taxon>Pentapetalae</taxon>
        <taxon>rosids</taxon>
        <taxon>malvids</taxon>
        <taxon>Brassicales</taxon>
        <taxon>Brassicaceae</taxon>
        <taxon>Camelineae</taxon>
        <taxon>Arabidopsis</taxon>
    </lineage>
</organism>
<accession>Q8L925</accession>
<accession>Q9LQA3</accession>
<accession>Q9XHD1</accession>
<feature type="chain" id="PRO_0000133716" description="Protein CRABS CLAW">
    <location>
        <begin position="1"/>
        <end position="181"/>
    </location>
</feature>
<feature type="zinc finger region" description="C4-type" evidence="2">
    <location>
        <begin position="26"/>
        <end position="53"/>
    </location>
</feature>
<feature type="region of interest" description="Disordered" evidence="3">
    <location>
        <begin position="80"/>
        <end position="122"/>
    </location>
</feature>
<feature type="compositionally biased region" description="Low complexity" evidence="3">
    <location>
        <begin position="87"/>
        <end position="99"/>
    </location>
</feature>
<feature type="compositionally biased region" description="Pro residues" evidence="3">
    <location>
        <begin position="100"/>
        <end position="109"/>
    </location>
</feature>
<feature type="mutagenesis site" description="In crc-7; abnormal gynoecium and lack of nectaries." evidence="5">
    <original>E</original>
    <variation>K</variation>
    <location>
        <position position="129"/>
    </location>
</feature>
<feature type="sequence conflict" description="In Ref. 5; AAM66994." evidence="12" ref="5">
    <original>K</original>
    <variation>T</variation>
    <location>
        <position position="155"/>
    </location>
</feature>
<sequence>MNLEEKPTMTASRASPQAEHLYYVRCSICNTILAVGIPLKRMLDTVTVKCGHCGNLSFLTTTPPLQGHVSLTLQMQSFGGSDYKKGSSSSSSSSTSSDQPPSPSPPFVVKPPEKKQRLPSAYNRFMRDEIQRIKSANPEIPHREAFSAAAKNWAKYIPNSPTSITSGGHNMIHGLGFGEKK</sequence>
<gene>
    <name evidence="11" type="primary">CRC</name>
    <name evidence="13" type="ordered locus">At1g69180</name>
    <name evidence="15" type="ORF">F23O10.23</name>
    <name evidence="14" type="ORF">F4N2.14</name>
</gene>
<dbReference type="EMBL" id="AF132606">
    <property type="protein sequence ID" value="AAD30526.1"/>
    <property type="molecule type" value="mRNA"/>
</dbReference>
<dbReference type="EMBL" id="AC008262">
    <property type="protein sequence ID" value="AAF27068.1"/>
    <property type="status" value="ALT_SEQ"/>
    <property type="molecule type" value="Genomic_DNA"/>
</dbReference>
<dbReference type="EMBL" id="AC018364">
    <property type="protein sequence ID" value="AAG52485.1"/>
    <property type="molecule type" value="Genomic_DNA"/>
</dbReference>
<dbReference type="EMBL" id="CP002684">
    <property type="protein sequence ID" value="AEE34891.1"/>
    <property type="molecule type" value="Genomic_DNA"/>
</dbReference>
<dbReference type="EMBL" id="BT008618">
    <property type="protein sequence ID" value="AAP40440.1"/>
    <property type="molecule type" value="mRNA"/>
</dbReference>
<dbReference type="EMBL" id="AY088672">
    <property type="protein sequence ID" value="AAM66994.1"/>
    <property type="status" value="ALT_INIT"/>
    <property type="molecule type" value="mRNA"/>
</dbReference>
<dbReference type="PIR" id="G96715">
    <property type="entry name" value="G96715"/>
</dbReference>
<dbReference type="RefSeq" id="NP_177078.1">
    <property type="nucleotide sequence ID" value="NM_105585.3"/>
</dbReference>
<dbReference type="SMR" id="Q8L925"/>
<dbReference type="BioGRID" id="28470">
    <property type="interactions" value="14"/>
</dbReference>
<dbReference type="IntAct" id="Q8L925">
    <property type="interactions" value="22"/>
</dbReference>
<dbReference type="STRING" id="3702.Q8L925"/>
<dbReference type="iPTMnet" id="Q8L925"/>
<dbReference type="PaxDb" id="3702-AT1G69180.1"/>
<dbReference type="ProteomicsDB" id="222637"/>
<dbReference type="EnsemblPlants" id="AT1G69180.1">
    <property type="protein sequence ID" value="AT1G69180.1"/>
    <property type="gene ID" value="AT1G69180"/>
</dbReference>
<dbReference type="GeneID" id="843249"/>
<dbReference type="Gramene" id="AT1G69180.1">
    <property type="protein sequence ID" value="AT1G69180.1"/>
    <property type="gene ID" value="AT1G69180"/>
</dbReference>
<dbReference type="KEGG" id="ath:AT1G69180"/>
<dbReference type="Araport" id="AT1G69180"/>
<dbReference type="TAIR" id="AT1G69180">
    <property type="gene designation" value="CRC"/>
</dbReference>
<dbReference type="eggNOG" id="ENOG502QVCI">
    <property type="taxonomic scope" value="Eukaryota"/>
</dbReference>
<dbReference type="HOGENOM" id="CLU_071156_2_0_1"/>
<dbReference type="InParanoid" id="Q8L925"/>
<dbReference type="OMA" id="MNHEEKV"/>
<dbReference type="PhylomeDB" id="Q8L925"/>
<dbReference type="PRO" id="PR:Q8L925"/>
<dbReference type="Proteomes" id="UP000006548">
    <property type="component" value="Chromosome 1"/>
</dbReference>
<dbReference type="ExpressionAtlas" id="Q8L925">
    <property type="expression patterns" value="baseline and differential"/>
</dbReference>
<dbReference type="GO" id="GO:0005634">
    <property type="term" value="C:nucleus"/>
    <property type="evidence" value="ECO:0007669"/>
    <property type="project" value="UniProtKB-SubCell"/>
</dbReference>
<dbReference type="GO" id="GO:0003700">
    <property type="term" value="F:DNA-binding transcription factor activity"/>
    <property type="evidence" value="ECO:0000250"/>
    <property type="project" value="TAIR"/>
</dbReference>
<dbReference type="GO" id="GO:0043565">
    <property type="term" value="F:sequence-specific DNA binding"/>
    <property type="evidence" value="ECO:0000353"/>
    <property type="project" value="TAIR"/>
</dbReference>
<dbReference type="GO" id="GO:0000976">
    <property type="term" value="F:transcription cis-regulatory region binding"/>
    <property type="evidence" value="ECO:0000353"/>
    <property type="project" value="TAIR"/>
</dbReference>
<dbReference type="GO" id="GO:0008270">
    <property type="term" value="F:zinc ion binding"/>
    <property type="evidence" value="ECO:0007669"/>
    <property type="project" value="UniProtKB-KW"/>
</dbReference>
<dbReference type="GO" id="GO:0048440">
    <property type="term" value="P:carpel development"/>
    <property type="evidence" value="ECO:0000315"/>
    <property type="project" value="TAIR"/>
</dbReference>
<dbReference type="GO" id="GO:0030154">
    <property type="term" value="P:cell differentiation"/>
    <property type="evidence" value="ECO:0007669"/>
    <property type="project" value="UniProtKB-KW"/>
</dbReference>
<dbReference type="GO" id="GO:0010582">
    <property type="term" value="P:floral meristem determinacy"/>
    <property type="evidence" value="ECO:0000316"/>
    <property type="project" value="TAIR"/>
</dbReference>
<dbReference type="GO" id="GO:0010254">
    <property type="term" value="P:nectary development"/>
    <property type="evidence" value="ECO:0000315"/>
    <property type="project" value="TAIR"/>
</dbReference>
<dbReference type="GO" id="GO:0009944">
    <property type="term" value="P:polarity specification of adaxial/abaxial axis"/>
    <property type="evidence" value="ECO:0000304"/>
    <property type="project" value="TAIR"/>
</dbReference>
<dbReference type="GO" id="GO:0006355">
    <property type="term" value="P:regulation of DNA-templated transcription"/>
    <property type="evidence" value="ECO:0000304"/>
    <property type="project" value="TAIR"/>
</dbReference>
<dbReference type="GO" id="GO:0048479">
    <property type="term" value="P:style development"/>
    <property type="evidence" value="ECO:0000315"/>
    <property type="project" value="TAIR"/>
</dbReference>
<dbReference type="CDD" id="cd00084">
    <property type="entry name" value="HMG-box_SF"/>
    <property type="match status" value="1"/>
</dbReference>
<dbReference type="FunFam" id="1.10.30.10:FF:000039">
    <property type="entry name" value="protein CRABS CLAW isoform X3"/>
    <property type="match status" value="1"/>
</dbReference>
<dbReference type="Gene3D" id="1.10.30.10">
    <property type="entry name" value="High mobility group box domain"/>
    <property type="match status" value="1"/>
</dbReference>
<dbReference type="InterPro" id="IPR036910">
    <property type="entry name" value="HMG_box_dom_sf"/>
</dbReference>
<dbReference type="InterPro" id="IPR006780">
    <property type="entry name" value="YABBY"/>
</dbReference>
<dbReference type="InterPro" id="IPR056775">
    <property type="entry name" value="YABBY_C"/>
</dbReference>
<dbReference type="InterPro" id="IPR056776">
    <property type="entry name" value="YABBY_N"/>
</dbReference>
<dbReference type="PANTHER" id="PTHR31675:SF1">
    <property type="entry name" value="PROTEIN CRABS CLAW"/>
    <property type="match status" value="1"/>
</dbReference>
<dbReference type="PANTHER" id="PTHR31675">
    <property type="entry name" value="PROTEIN YABBY 6-RELATED"/>
    <property type="match status" value="1"/>
</dbReference>
<dbReference type="Pfam" id="PF04690">
    <property type="entry name" value="YABBY"/>
    <property type="match status" value="1"/>
</dbReference>
<dbReference type="Pfam" id="PF24868">
    <property type="entry name" value="YABBY_N"/>
    <property type="match status" value="1"/>
</dbReference>
<dbReference type="SUPFAM" id="SSF47095">
    <property type="entry name" value="HMG-box"/>
    <property type="match status" value="1"/>
</dbReference>